<name>TRUA2_PARUW</name>
<dbReference type="EC" id="5.4.99.12" evidence="1"/>
<dbReference type="EMBL" id="BX908798">
    <property type="protein sequence ID" value="CAF23406.1"/>
    <property type="molecule type" value="Genomic_DNA"/>
</dbReference>
<dbReference type="SMR" id="Q6MDE3"/>
<dbReference type="STRING" id="264201.pc0682"/>
<dbReference type="eggNOG" id="COG0101">
    <property type="taxonomic scope" value="Bacteria"/>
</dbReference>
<dbReference type="HOGENOM" id="CLU_014673_0_1_0"/>
<dbReference type="Proteomes" id="UP000000529">
    <property type="component" value="Chromosome"/>
</dbReference>
<dbReference type="GO" id="GO:0003723">
    <property type="term" value="F:RNA binding"/>
    <property type="evidence" value="ECO:0007669"/>
    <property type="project" value="InterPro"/>
</dbReference>
<dbReference type="GO" id="GO:0160147">
    <property type="term" value="F:tRNA pseudouridine(38-40) synthase activity"/>
    <property type="evidence" value="ECO:0007669"/>
    <property type="project" value="UniProtKB-EC"/>
</dbReference>
<dbReference type="GO" id="GO:0031119">
    <property type="term" value="P:tRNA pseudouridine synthesis"/>
    <property type="evidence" value="ECO:0007669"/>
    <property type="project" value="UniProtKB-UniRule"/>
</dbReference>
<dbReference type="CDD" id="cd02570">
    <property type="entry name" value="PseudoU_synth_EcTruA"/>
    <property type="match status" value="1"/>
</dbReference>
<dbReference type="FunFam" id="3.30.70.580:FF:000001">
    <property type="entry name" value="tRNA pseudouridine synthase A"/>
    <property type="match status" value="1"/>
</dbReference>
<dbReference type="Gene3D" id="3.30.70.660">
    <property type="entry name" value="Pseudouridine synthase I, catalytic domain, C-terminal subdomain"/>
    <property type="match status" value="1"/>
</dbReference>
<dbReference type="Gene3D" id="3.30.70.580">
    <property type="entry name" value="Pseudouridine synthase I, catalytic domain, N-terminal subdomain"/>
    <property type="match status" value="1"/>
</dbReference>
<dbReference type="HAMAP" id="MF_00171">
    <property type="entry name" value="TruA"/>
    <property type="match status" value="1"/>
</dbReference>
<dbReference type="InterPro" id="IPR020103">
    <property type="entry name" value="PsdUridine_synth_cat_dom_sf"/>
</dbReference>
<dbReference type="InterPro" id="IPR001406">
    <property type="entry name" value="PsdUridine_synth_TruA"/>
</dbReference>
<dbReference type="InterPro" id="IPR020097">
    <property type="entry name" value="PsdUridine_synth_TruA_a/b_dom"/>
</dbReference>
<dbReference type="InterPro" id="IPR020095">
    <property type="entry name" value="PsdUridine_synth_TruA_C"/>
</dbReference>
<dbReference type="InterPro" id="IPR020094">
    <property type="entry name" value="TruA/RsuA/RluB/E/F_N"/>
</dbReference>
<dbReference type="NCBIfam" id="TIGR00071">
    <property type="entry name" value="hisT_truA"/>
    <property type="match status" value="1"/>
</dbReference>
<dbReference type="PANTHER" id="PTHR11142">
    <property type="entry name" value="PSEUDOURIDYLATE SYNTHASE"/>
    <property type="match status" value="1"/>
</dbReference>
<dbReference type="PANTHER" id="PTHR11142:SF0">
    <property type="entry name" value="TRNA PSEUDOURIDINE SYNTHASE-LIKE 1"/>
    <property type="match status" value="1"/>
</dbReference>
<dbReference type="Pfam" id="PF01416">
    <property type="entry name" value="PseudoU_synth_1"/>
    <property type="match status" value="2"/>
</dbReference>
<dbReference type="PIRSF" id="PIRSF001430">
    <property type="entry name" value="tRNA_psdUrid_synth"/>
    <property type="match status" value="1"/>
</dbReference>
<dbReference type="SUPFAM" id="SSF55120">
    <property type="entry name" value="Pseudouridine synthase"/>
    <property type="match status" value="1"/>
</dbReference>
<protein>
    <recommendedName>
        <fullName evidence="1">tRNA pseudouridine synthase A 2</fullName>
        <ecNumber evidence="1">5.4.99.12</ecNumber>
    </recommendedName>
    <alternativeName>
        <fullName evidence="1">tRNA pseudouridine(38-40) synthase</fullName>
    </alternativeName>
    <alternativeName>
        <fullName evidence="1">tRNA pseudouridylate synthase I 2</fullName>
    </alternativeName>
    <alternativeName>
        <fullName evidence="1">tRNA-uridine isomerase I 2</fullName>
    </alternativeName>
</protein>
<proteinExistence type="inferred from homology"/>
<reference key="1">
    <citation type="journal article" date="2004" name="Science">
        <title>Illuminating the evolutionary history of chlamydiae.</title>
        <authorList>
            <person name="Horn M."/>
            <person name="Collingro A."/>
            <person name="Schmitz-Esser S."/>
            <person name="Beier C.L."/>
            <person name="Purkhold U."/>
            <person name="Fartmann B."/>
            <person name="Brandt P."/>
            <person name="Nyakatura G.J."/>
            <person name="Droege M."/>
            <person name="Frishman D."/>
            <person name="Rattei T."/>
            <person name="Mewes H.-W."/>
            <person name="Wagner M."/>
        </authorList>
    </citation>
    <scope>NUCLEOTIDE SEQUENCE [LARGE SCALE GENOMIC DNA]</scope>
    <source>
        <strain>UWE25</strain>
    </source>
</reference>
<organism>
    <name type="scientific">Protochlamydia amoebophila (strain UWE25)</name>
    <dbReference type="NCBI Taxonomy" id="264201"/>
    <lineage>
        <taxon>Bacteria</taxon>
        <taxon>Pseudomonadati</taxon>
        <taxon>Chlamydiota</taxon>
        <taxon>Chlamydiia</taxon>
        <taxon>Parachlamydiales</taxon>
        <taxon>Parachlamydiaceae</taxon>
        <taxon>Candidatus Protochlamydia</taxon>
    </lineage>
</organism>
<keyword id="KW-0413">Isomerase</keyword>
<keyword id="KW-1185">Reference proteome</keyword>
<keyword id="KW-0819">tRNA processing</keyword>
<comment type="function">
    <text evidence="1">Formation of pseudouridine at positions 38, 39 and 40 in the anticodon stem and loop of transfer RNAs.</text>
</comment>
<comment type="catalytic activity">
    <reaction evidence="1">
        <text>uridine(38/39/40) in tRNA = pseudouridine(38/39/40) in tRNA</text>
        <dbReference type="Rhea" id="RHEA:22376"/>
        <dbReference type="Rhea" id="RHEA-COMP:10085"/>
        <dbReference type="Rhea" id="RHEA-COMP:10087"/>
        <dbReference type="ChEBI" id="CHEBI:65314"/>
        <dbReference type="ChEBI" id="CHEBI:65315"/>
        <dbReference type="EC" id="5.4.99.12"/>
    </reaction>
</comment>
<comment type="subunit">
    <text evidence="1">Homodimer.</text>
</comment>
<comment type="similarity">
    <text evidence="1">Belongs to the tRNA pseudouridine synthase TruA family.</text>
</comment>
<sequence>MDYTTQSDLSLSKSMQNIKLKIAYDGQAYFGWQKTPAGPSVEKTLQNSLEQILQHTISLQAASRTDKGVHARGQIVNFLTTKSITDLQKFILSLNSLLPTDLRILSAEKMPSTFHPTLNCVAKEYCYYICYDFVQLPEYRPYSWHCPFPLMLGKMTQAISVLIGEHDFSAFCNFKKNVNYTDYIRRVQAIHLEVLNHKRLCIRIKGNHFLYKMVRNIVGTLIYIGKGKLMVEDIPSILQSQDRKMAGVTAPAHGLFLQTVLY</sequence>
<gene>
    <name evidence="1" type="primary">truA2</name>
    <name type="ordered locus">pc0682</name>
</gene>
<feature type="chain" id="PRO_0000057426" description="tRNA pseudouridine synthase A 2">
    <location>
        <begin position="1"/>
        <end position="262"/>
    </location>
</feature>
<feature type="active site" description="Nucleophile" evidence="1">
    <location>
        <position position="66"/>
    </location>
</feature>
<feature type="binding site" evidence="1">
    <location>
        <position position="125"/>
    </location>
    <ligand>
        <name>substrate</name>
    </ligand>
</feature>
<accession>Q6MDE3</accession>
<evidence type="ECO:0000255" key="1">
    <source>
        <dbReference type="HAMAP-Rule" id="MF_00171"/>
    </source>
</evidence>